<name>UL139_HCMVM</name>
<reference key="1">
    <citation type="journal article" date="2004" name="J. Gen. Virol.">
        <title>Genetic content of wild-type human cytomegalovirus.</title>
        <authorList>
            <person name="Dolan A."/>
            <person name="Cunningham C."/>
            <person name="Hector R.D."/>
            <person name="Hassan-Walker A.F."/>
            <person name="Lee L."/>
            <person name="Addison C."/>
            <person name="Dargan D.J."/>
            <person name="McGeoch D.J."/>
            <person name="Gatherer D."/>
            <person name="Emery V.C."/>
            <person name="Griffiths P.D."/>
            <person name="Sinzger C."/>
            <person name="McSharry B.P."/>
            <person name="Wilkinson G.W.G."/>
            <person name="Davison A.J."/>
        </authorList>
    </citation>
    <scope>NUCLEOTIDE SEQUENCE [LARGE SCALE GENOMIC DNA]</scope>
</reference>
<organismHost>
    <name type="scientific">Homo sapiens</name>
    <name type="common">Human</name>
    <dbReference type="NCBI Taxonomy" id="9606"/>
</organismHost>
<keyword id="KW-1043">Host membrane</keyword>
<keyword id="KW-0472">Membrane</keyword>
<keyword id="KW-1185">Reference proteome</keyword>
<keyword id="KW-0732">Signal</keyword>
<keyword id="KW-0812">Transmembrane</keyword>
<keyword id="KW-1133">Transmembrane helix</keyword>
<gene>
    <name type="primary">UL139</name>
</gene>
<sequence>MLWILVLFALAASASETTTGTSSNSSQSTSAGTTNTTTPSTACINASNGSDLGAPQLALLAASGWTLSGLLLIFTCCLCCFWLVRKVCSCCGNSSESESKATHAYTNAAFTSSDATLPMGTTGSYTPPQDGSFPPPPR</sequence>
<feature type="signal peptide" evidence="1">
    <location>
        <begin position="1"/>
        <end position="15"/>
    </location>
</feature>
<feature type="chain" id="PRO_0000418302" description="Membrane glycoprotein UL139">
    <location>
        <begin position="16"/>
        <end position="138"/>
    </location>
</feature>
<feature type="transmembrane region" description="Helical" evidence="1">
    <location>
        <begin position="64"/>
        <end position="84"/>
    </location>
</feature>
<feature type="region of interest" description="Disordered" evidence="2">
    <location>
        <begin position="17"/>
        <end position="37"/>
    </location>
</feature>
<feature type="region of interest" description="Disordered" evidence="2">
    <location>
        <begin position="113"/>
        <end position="138"/>
    </location>
</feature>
<feature type="compositionally biased region" description="Polar residues" evidence="2">
    <location>
        <begin position="113"/>
        <end position="129"/>
    </location>
</feature>
<protein>
    <recommendedName>
        <fullName>Membrane glycoprotein UL139</fullName>
    </recommendedName>
</protein>
<accession>Q6SW14</accession>
<accession>D2K3T7</accession>
<evidence type="ECO:0000255" key="1"/>
<evidence type="ECO:0000256" key="2">
    <source>
        <dbReference type="SAM" id="MobiDB-lite"/>
    </source>
</evidence>
<evidence type="ECO:0000305" key="3"/>
<comment type="subcellular location">
    <subcellularLocation>
        <location evidence="3">Host membrane</location>
        <topology evidence="3">Single-pass membrane protein</topology>
    </subcellularLocation>
</comment>
<proteinExistence type="inferred from homology"/>
<dbReference type="EMBL" id="AY446894">
    <property type="protein sequence ID" value="AAR31681.1"/>
    <property type="molecule type" value="Genomic_DNA"/>
</dbReference>
<dbReference type="RefSeq" id="YP_081577.1">
    <property type="nucleotide sequence ID" value="NC_006273.2"/>
</dbReference>
<dbReference type="DNASU" id="3077570"/>
<dbReference type="GeneID" id="3077570"/>
<dbReference type="KEGG" id="vg:3077570"/>
<dbReference type="Proteomes" id="UP000000938">
    <property type="component" value="Segment"/>
</dbReference>
<dbReference type="GO" id="GO:0033644">
    <property type="term" value="C:host cell membrane"/>
    <property type="evidence" value="ECO:0007669"/>
    <property type="project" value="UniProtKB-SubCell"/>
</dbReference>
<dbReference type="GO" id="GO:0016020">
    <property type="term" value="C:membrane"/>
    <property type="evidence" value="ECO:0007669"/>
    <property type="project" value="UniProtKB-KW"/>
</dbReference>
<dbReference type="InterPro" id="IPR021042">
    <property type="entry name" value="Herpes_UL139_cytomegalovirus"/>
</dbReference>
<dbReference type="Pfam" id="PF12507">
    <property type="entry name" value="HCMV_UL139"/>
    <property type="match status" value="1"/>
</dbReference>
<organism>
    <name type="scientific">Human cytomegalovirus (strain Merlin)</name>
    <name type="common">HHV-5</name>
    <name type="synonym">Human herpesvirus 5</name>
    <dbReference type="NCBI Taxonomy" id="295027"/>
    <lineage>
        <taxon>Viruses</taxon>
        <taxon>Duplodnaviria</taxon>
        <taxon>Heunggongvirae</taxon>
        <taxon>Peploviricota</taxon>
        <taxon>Herviviricetes</taxon>
        <taxon>Herpesvirales</taxon>
        <taxon>Orthoherpesviridae</taxon>
        <taxon>Betaherpesvirinae</taxon>
        <taxon>Cytomegalovirus</taxon>
        <taxon>Cytomegalovirus humanbeta5</taxon>
        <taxon>Human cytomegalovirus</taxon>
    </lineage>
</organism>